<feature type="signal peptide" evidence="1">
    <location>
        <begin position="1"/>
        <end position="17"/>
    </location>
</feature>
<feature type="chain" id="PRO_1000021669" description="Outer-membrane lipoprotein LolB">
    <location>
        <begin position="18"/>
        <end position="205"/>
    </location>
</feature>
<feature type="lipid moiety-binding region" description="N-palmitoyl cysteine" evidence="1">
    <location>
        <position position="18"/>
    </location>
</feature>
<feature type="lipid moiety-binding region" description="S-diacylglycerol cysteine" evidence="1">
    <location>
        <position position="18"/>
    </location>
</feature>
<comment type="function">
    <text evidence="1">Plays a critical role in the incorporation of lipoproteins in the outer membrane after they are released by the LolA protein.</text>
</comment>
<comment type="subunit">
    <text evidence="1">Monomer.</text>
</comment>
<comment type="subcellular location">
    <subcellularLocation>
        <location evidence="1">Cell outer membrane</location>
        <topology evidence="1">Lipid-anchor</topology>
    </subcellularLocation>
</comment>
<comment type="similarity">
    <text evidence="1">Belongs to the LolB family.</text>
</comment>
<protein>
    <recommendedName>
        <fullName evidence="1">Outer-membrane lipoprotein LolB</fullName>
    </recommendedName>
</protein>
<keyword id="KW-0998">Cell outer membrane</keyword>
<keyword id="KW-0143">Chaperone</keyword>
<keyword id="KW-0449">Lipoprotein</keyword>
<keyword id="KW-0472">Membrane</keyword>
<keyword id="KW-0564">Palmitate</keyword>
<keyword id="KW-0653">Protein transport</keyword>
<keyword id="KW-0732">Signal</keyword>
<keyword id="KW-0813">Transport</keyword>
<sequence length="205" mass="22918">MFLRHFIVFSFIALLAGCAGFGARESVQGQGNPAQWRLHKDQLTGLDGWQINGKIGIRAPKDSGSGTLFWLQRQDYYDIRLSGPLGRGAARLTGRPGQVSLEVANQGRYESASPETLLEEQLGWKLPVSHLAWWVRGLPAPDSKSRLTLDGDSHLASLEQDGWQVEYSSYSQQNGYWLPERIKLNGSDLDVTLVIKEWLPRKLGQ</sequence>
<reference key="1">
    <citation type="journal article" date="2005" name="Nat. Biotechnol.">
        <title>Complete genome sequence of the plant commensal Pseudomonas fluorescens Pf-5.</title>
        <authorList>
            <person name="Paulsen I.T."/>
            <person name="Press C.M."/>
            <person name="Ravel J."/>
            <person name="Kobayashi D.Y."/>
            <person name="Myers G.S.A."/>
            <person name="Mavrodi D.V."/>
            <person name="DeBoy R.T."/>
            <person name="Seshadri R."/>
            <person name="Ren Q."/>
            <person name="Madupu R."/>
            <person name="Dodson R.J."/>
            <person name="Durkin A.S."/>
            <person name="Brinkac L.M."/>
            <person name="Daugherty S.C."/>
            <person name="Sullivan S.A."/>
            <person name="Rosovitz M.J."/>
            <person name="Gwinn M.L."/>
            <person name="Zhou L."/>
            <person name="Schneider D.J."/>
            <person name="Cartinhour S.W."/>
            <person name="Nelson W.C."/>
            <person name="Weidman J."/>
            <person name="Watkins K."/>
            <person name="Tran K."/>
            <person name="Khouri H."/>
            <person name="Pierson E.A."/>
            <person name="Pierson L.S. III"/>
            <person name="Thomashow L.S."/>
            <person name="Loper J.E."/>
        </authorList>
    </citation>
    <scope>NUCLEOTIDE SEQUENCE [LARGE SCALE GENOMIC DNA]</scope>
    <source>
        <strain>ATCC BAA-477 / NRRL B-23932 / Pf-5</strain>
    </source>
</reference>
<evidence type="ECO:0000255" key="1">
    <source>
        <dbReference type="HAMAP-Rule" id="MF_00233"/>
    </source>
</evidence>
<gene>
    <name evidence="1" type="primary">lolB</name>
    <name type="ordered locus">PFL_5162</name>
</gene>
<organism>
    <name type="scientific">Pseudomonas fluorescens (strain ATCC BAA-477 / NRRL B-23932 / Pf-5)</name>
    <dbReference type="NCBI Taxonomy" id="220664"/>
    <lineage>
        <taxon>Bacteria</taxon>
        <taxon>Pseudomonadati</taxon>
        <taxon>Pseudomonadota</taxon>
        <taxon>Gammaproteobacteria</taxon>
        <taxon>Pseudomonadales</taxon>
        <taxon>Pseudomonadaceae</taxon>
        <taxon>Pseudomonas</taxon>
    </lineage>
</organism>
<proteinExistence type="inferred from homology"/>
<name>LOLB_PSEF5</name>
<dbReference type="EMBL" id="CP000076">
    <property type="protein sequence ID" value="AAY94384.1"/>
    <property type="molecule type" value="Genomic_DNA"/>
</dbReference>
<dbReference type="RefSeq" id="WP_011063409.1">
    <property type="nucleotide sequence ID" value="NC_004129.6"/>
</dbReference>
<dbReference type="SMR" id="Q4K692"/>
<dbReference type="STRING" id="220664.PFL_5162"/>
<dbReference type="KEGG" id="pfl:PFL_5162"/>
<dbReference type="PATRIC" id="fig|220664.5.peg.5275"/>
<dbReference type="eggNOG" id="COG3017">
    <property type="taxonomic scope" value="Bacteria"/>
</dbReference>
<dbReference type="HOGENOM" id="CLU_092816_2_1_6"/>
<dbReference type="Proteomes" id="UP000008540">
    <property type="component" value="Chromosome"/>
</dbReference>
<dbReference type="GO" id="GO:0009279">
    <property type="term" value="C:cell outer membrane"/>
    <property type="evidence" value="ECO:0007669"/>
    <property type="project" value="UniProtKB-SubCell"/>
</dbReference>
<dbReference type="GO" id="GO:0044874">
    <property type="term" value="P:lipoprotein localization to outer membrane"/>
    <property type="evidence" value="ECO:0007669"/>
    <property type="project" value="UniProtKB-UniRule"/>
</dbReference>
<dbReference type="GO" id="GO:0015031">
    <property type="term" value="P:protein transport"/>
    <property type="evidence" value="ECO:0007669"/>
    <property type="project" value="UniProtKB-KW"/>
</dbReference>
<dbReference type="CDD" id="cd16326">
    <property type="entry name" value="LolB"/>
    <property type="match status" value="1"/>
</dbReference>
<dbReference type="Gene3D" id="2.50.20.10">
    <property type="entry name" value="Lipoprotein localisation LolA/LolB/LppX"/>
    <property type="match status" value="1"/>
</dbReference>
<dbReference type="HAMAP" id="MF_00233">
    <property type="entry name" value="LolB"/>
    <property type="match status" value="1"/>
</dbReference>
<dbReference type="InterPro" id="IPR029046">
    <property type="entry name" value="LolA/LolB/LppX"/>
</dbReference>
<dbReference type="InterPro" id="IPR004565">
    <property type="entry name" value="OM_lipoprot_LolB"/>
</dbReference>
<dbReference type="NCBIfam" id="TIGR00548">
    <property type="entry name" value="lolB"/>
    <property type="match status" value="1"/>
</dbReference>
<dbReference type="Pfam" id="PF03550">
    <property type="entry name" value="LolB"/>
    <property type="match status" value="1"/>
</dbReference>
<dbReference type="SUPFAM" id="SSF89392">
    <property type="entry name" value="Prokaryotic lipoproteins and lipoprotein localization factors"/>
    <property type="match status" value="1"/>
</dbReference>
<dbReference type="PROSITE" id="PS51257">
    <property type="entry name" value="PROKAR_LIPOPROTEIN"/>
    <property type="match status" value="1"/>
</dbReference>
<accession>Q4K692</accession>